<proteinExistence type="inferred from homology"/>
<comment type="similarity">
    <text evidence="1">Belongs to the UPF0297 family.</text>
</comment>
<protein>
    <recommendedName>
        <fullName evidence="1">UPF0297 protein OEOE_1166</fullName>
    </recommendedName>
</protein>
<reference key="1">
    <citation type="journal article" date="2006" name="Proc. Natl. Acad. Sci. U.S.A.">
        <title>Comparative genomics of the lactic acid bacteria.</title>
        <authorList>
            <person name="Makarova K.S."/>
            <person name="Slesarev A."/>
            <person name="Wolf Y.I."/>
            <person name="Sorokin A."/>
            <person name="Mirkin B."/>
            <person name="Koonin E.V."/>
            <person name="Pavlov A."/>
            <person name="Pavlova N."/>
            <person name="Karamychev V."/>
            <person name="Polouchine N."/>
            <person name="Shakhova V."/>
            <person name="Grigoriev I."/>
            <person name="Lou Y."/>
            <person name="Rohksar D."/>
            <person name="Lucas S."/>
            <person name="Huang K."/>
            <person name="Goodstein D.M."/>
            <person name="Hawkins T."/>
            <person name="Plengvidhya V."/>
            <person name="Welker D."/>
            <person name="Hughes J."/>
            <person name="Goh Y."/>
            <person name="Benson A."/>
            <person name="Baldwin K."/>
            <person name="Lee J.-H."/>
            <person name="Diaz-Muniz I."/>
            <person name="Dosti B."/>
            <person name="Smeianov V."/>
            <person name="Wechter W."/>
            <person name="Barabote R."/>
            <person name="Lorca G."/>
            <person name="Altermann E."/>
            <person name="Barrangou R."/>
            <person name="Ganesan B."/>
            <person name="Xie Y."/>
            <person name="Rawsthorne H."/>
            <person name="Tamir D."/>
            <person name="Parker C."/>
            <person name="Breidt F."/>
            <person name="Broadbent J.R."/>
            <person name="Hutkins R."/>
            <person name="O'Sullivan D."/>
            <person name="Steele J."/>
            <person name="Unlu G."/>
            <person name="Saier M.H. Jr."/>
            <person name="Klaenhammer T."/>
            <person name="Richardson P."/>
            <person name="Kozyavkin S."/>
            <person name="Weimer B.C."/>
            <person name="Mills D.A."/>
        </authorList>
    </citation>
    <scope>NUCLEOTIDE SEQUENCE [LARGE SCALE GENOMIC DNA]</scope>
    <source>
        <strain>ATCC BAA-331 / PSU-1</strain>
    </source>
</reference>
<dbReference type="EMBL" id="CP000411">
    <property type="protein sequence ID" value="ABJ57062.1"/>
    <property type="molecule type" value="Genomic_DNA"/>
</dbReference>
<dbReference type="RefSeq" id="WP_002817669.1">
    <property type="nucleotide sequence ID" value="NC_008528.1"/>
</dbReference>
<dbReference type="SMR" id="Q04ER0"/>
<dbReference type="STRING" id="203123.OEOE_1166"/>
<dbReference type="KEGG" id="ooe:OEOE_1166"/>
<dbReference type="eggNOG" id="COG4472">
    <property type="taxonomic scope" value="Bacteria"/>
</dbReference>
<dbReference type="HOGENOM" id="CLU_162466_0_0_9"/>
<dbReference type="Proteomes" id="UP000000774">
    <property type="component" value="Chromosome"/>
</dbReference>
<dbReference type="HAMAP" id="MF_01507">
    <property type="entry name" value="UPF0297"/>
    <property type="match status" value="1"/>
</dbReference>
<dbReference type="InterPro" id="IPR009309">
    <property type="entry name" value="IreB"/>
</dbReference>
<dbReference type="NCBIfam" id="NF003997">
    <property type="entry name" value="PRK05473.1"/>
    <property type="match status" value="1"/>
</dbReference>
<dbReference type="PANTHER" id="PTHR40067">
    <property type="entry name" value="UPF0297 PROTEIN YRZL"/>
    <property type="match status" value="1"/>
</dbReference>
<dbReference type="PANTHER" id="PTHR40067:SF1">
    <property type="entry name" value="UPF0297 PROTEIN YRZL"/>
    <property type="match status" value="1"/>
</dbReference>
<dbReference type="Pfam" id="PF06135">
    <property type="entry name" value="IreB"/>
    <property type="match status" value="1"/>
</dbReference>
<dbReference type="PIRSF" id="PIRSF037258">
    <property type="entry name" value="DUF965_bac"/>
    <property type="match status" value="1"/>
</dbReference>
<gene>
    <name type="ordered locus">OEOE_1166</name>
</gene>
<evidence type="ECO:0000255" key="1">
    <source>
        <dbReference type="HAMAP-Rule" id="MF_01507"/>
    </source>
</evidence>
<sequence length="90" mass="10554">MAEFEDTTVFNFGSQKPENVRSMLKLVYEALEEKGYNPINQIVGYLISGDPAYIPRLNDARNLIRRFERDEIVEELVKDYLSDHKTDQKK</sequence>
<feature type="chain" id="PRO_0000289309" description="UPF0297 protein OEOE_1166">
    <location>
        <begin position="1"/>
        <end position="90"/>
    </location>
</feature>
<name>Y1166_OENOB</name>
<organism>
    <name type="scientific">Oenococcus oeni (strain ATCC BAA-331 / PSU-1)</name>
    <dbReference type="NCBI Taxonomy" id="203123"/>
    <lineage>
        <taxon>Bacteria</taxon>
        <taxon>Bacillati</taxon>
        <taxon>Bacillota</taxon>
        <taxon>Bacilli</taxon>
        <taxon>Lactobacillales</taxon>
        <taxon>Lactobacillaceae</taxon>
        <taxon>Oenococcus</taxon>
    </lineage>
</organism>
<keyword id="KW-1185">Reference proteome</keyword>
<accession>Q04ER0</accession>